<protein>
    <recommendedName>
        <fullName>NF-kappa-B inhibitor-like protein 1</fullName>
    </recommendedName>
    <alternativeName>
        <fullName>Inhibitor of kappa B-like protein</fullName>
        <shortName>I-kappa-B-like protein</shortName>
        <shortName>IkappaBL</shortName>
    </alternativeName>
    <alternativeName>
        <fullName>Nuclear factor of kappa light polypeptide gene enhancer in B-cells inhibitor-like 1</fullName>
    </alternativeName>
</protein>
<feature type="chain" id="PRO_0000067014" description="NF-kappa-B inhibitor-like protein 1">
    <location>
        <begin position="1"/>
        <end position="381"/>
    </location>
</feature>
<feature type="repeat" description="ANK 1">
    <location>
        <begin position="64"/>
        <end position="93"/>
    </location>
</feature>
<feature type="repeat" description="ANK 2">
    <location>
        <begin position="97"/>
        <end position="133"/>
    </location>
</feature>
<feature type="region of interest" description="Disordered" evidence="3">
    <location>
        <begin position="1"/>
        <end position="32"/>
    </location>
</feature>
<feature type="region of interest" description="Disordered" evidence="3">
    <location>
        <begin position="129"/>
        <end position="166"/>
    </location>
</feature>
<feature type="region of interest" description="Disordered" evidence="3">
    <location>
        <begin position="186"/>
        <end position="242"/>
    </location>
</feature>
<feature type="region of interest" description="Disordered" evidence="3">
    <location>
        <begin position="257"/>
        <end position="294"/>
    </location>
</feature>
<feature type="compositionally biased region" description="Polar residues" evidence="3">
    <location>
        <begin position="14"/>
        <end position="26"/>
    </location>
</feature>
<feature type="compositionally biased region" description="Acidic residues" evidence="3">
    <location>
        <begin position="150"/>
        <end position="159"/>
    </location>
</feature>
<feature type="compositionally biased region" description="Basic and acidic residues" evidence="3">
    <location>
        <begin position="204"/>
        <end position="228"/>
    </location>
</feature>
<feature type="compositionally biased region" description="Basic and acidic residues" evidence="3">
    <location>
        <begin position="257"/>
        <end position="270"/>
    </location>
</feature>
<feature type="modified residue" description="Phosphoserine" evidence="2">
    <location>
        <position position="150"/>
    </location>
</feature>
<dbReference type="EMBL" id="BX883046">
    <property type="protein sequence ID" value="CAE84005.1"/>
    <property type="molecule type" value="Genomic_DNA"/>
</dbReference>
<dbReference type="EMBL" id="BC099772">
    <property type="protein sequence ID" value="AAH99772.1"/>
    <property type="molecule type" value="mRNA"/>
</dbReference>
<dbReference type="EMBL" id="AF387339">
    <property type="protein sequence ID" value="AAL98918.1"/>
    <property type="status" value="ALT_SEQ"/>
    <property type="molecule type" value="Genomic_DNA"/>
</dbReference>
<dbReference type="RefSeq" id="NP_997674.1">
    <property type="nucleotide sequence ID" value="NM_212509.2"/>
</dbReference>
<dbReference type="SMR" id="Q8R2H1"/>
<dbReference type="FunCoup" id="Q8R2H1">
    <property type="interactions" value="512"/>
</dbReference>
<dbReference type="STRING" id="10116.ENSRNOP00000001113"/>
<dbReference type="PhosphoSitePlus" id="Q8R2H1"/>
<dbReference type="PaxDb" id="10116-ENSRNOP00000001113"/>
<dbReference type="Ensembl" id="ENSRNOT00000001113.6">
    <property type="protein sequence ID" value="ENSRNOP00000001113.2"/>
    <property type="gene ID" value="ENSRNOG00000000839.6"/>
</dbReference>
<dbReference type="GeneID" id="361794"/>
<dbReference type="KEGG" id="rno:361794"/>
<dbReference type="UCSC" id="RGD:1303310">
    <property type="organism name" value="rat"/>
</dbReference>
<dbReference type="AGR" id="RGD:1303310"/>
<dbReference type="CTD" id="4795"/>
<dbReference type="RGD" id="1303310">
    <property type="gene designation" value="Nfkbil1"/>
</dbReference>
<dbReference type="eggNOG" id="ENOG502QTMZ">
    <property type="taxonomic scope" value="Eukaryota"/>
</dbReference>
<dbReference type="GeneTree" id="ENSGT00390000013929"/>
<dbReference type="HOGENOM" id="CLU_054217_0_0_1"/>
<dbReference type="InParanoid" id="Q8R2H1"/>
<dbReference type="OMA" id="QEAQGDQ"/>
<dbReference type="OrthoDB" id="412109at2759"/>
<dbReference type="PhylomeDB" id="Q8R2H1"/>
<dbReference type="TreeFam" id="TF333242"/>
<dbReference type="PRO" id="PR:Q8R2H1"/>
<dbReference type="Proteomes" id="UP000002494">
    <property type="component" value="Chromosome 20"/>
</dbReference>
<dbReference type="Bgee" id="ENSRNOG00000000839">
    <property type="expression patterns" value="Expressed in testis and 20 other cell types or tissues"/>
</dbReference>
<dbReference type="ExpressionAtlas" id="Q8R2H1">
    <property type="expression patterns" value="baseline and differential"/>
</dbReference>
<dbReference type="GO" id="GO:0005654">
    <property type="term" value="C:nucleoplasm"/>
    <property type="evidence" value="ECO:0007669"/>
    <property type="project" value="Ensembl"/>
</dbReference>
<dbReference type="GO" id="GO:0005634">
    <property type="term" value="C:nucleus"/>
    <property type="evidence" value="ECO:0000250"/>
    <property type="project" value="UniProtKB"/>
</dbReference>
<dbReference type="GO" id="GO:0140416">
    <property type="term" value="F:transcription regulator inhibitor activity"/>
    <property type="evidence" value="ECO:0000266"/>
    <property type="project" value="RGD"/>
</dbReference>
<dbReference type="GO" id="GO:0071222">
    <property type="term" value="P:cellular response to lipopolysaccharide"/>
    <property type="evidence" value="ECO:0000250"/>
    <property type="project" value="UniProtKB"/>
</dbReference>
<dbReference type="GO" id="GO:0043124">
    <property type="term" value="P:negative regulation of canonical NF-kappaB signal transduction"/>
    <property type="evidence" value="ECO:0000266"/>
    <property type="project" value="RGD"/>
</dbReference>
<dbReference type="GO" id="GO:0031665">
    <property type="term" value="P:negative regulation of lipopolysaccharide-mediated signaling pathway"/>
    <property type="evidence" value="ECO:0000250"/>
    <property type="project" value="UniProtKB"/>
</dbReference>
<dbReference type="GO" id="GO:0032088">
    <property type="term" value="P:negative regulation of NF-kappaB transcription factor activity"/>
    <property type="evidence" value="ECO:0000250"/>
    <property type="project" value="UniProtKB"/>
</dbReference>
<dbReference type="GO" id="GO:0034122">
    <property type="term" value="P:negative regulation of toll-like receptor signaling pathway"/>
    <property type="evidence" value="ECO:0000250"/>
    <property type="project" value="UniProtKB"/>
</dbReference>
<dbReference type="GO" id="GO:0032720">
    <property type="term" value="P:negative regulation of tumor necrosis factor production"/>
    <property type="evidence" value="ECO:0000250"/>
    <property type="project" value="UniProtKB"/>
</dbReference>
<dbReference type="FunFam" id="1.25.40.20:FF:000145">
    <property type="entry name" value="NF-kappa-B inhibitor-like protein 1 isoform X1"/>
    <property type="match status" value="1"/>
</dbReference>
<dbReference type="Gene3D" id="1.25.40.20">
    <property type="entry name" value="Ankyrin repeat-containing domain"/>
    <property type="match status" value="1"/>
</dbReference>
<dbReference type="InterPro" id="IPR036770">
    <property type="entry name" value="Ankyrin_rpt-contain_sf"/>
</dbReference>
<dbReference type="InterPro" id="IPR038753">
    <property type="entry name" value="NFKBIL1"/>
</dbReference>
<dbReference type="PANTHER" id="PTHR15263">
    <property type="entry name" value="I-KAPPA-B-LIKE PROTEIN IKBL"/>
    <property type="match status" value="1"/>
</dbReference>
<dbReference type="PANTHER" id="PTHR15263:SF1">
    <property type="entry name" value="NF-KAPPA-B INHIBITOR-LIKE PROTEIN 1"/>
    <property type="match status" value="1"/>
</dbReference>
<dbReference type="SUPFAM" id="SSF48403">
    <property type="entry name" value="Ankyrin repeat"/>
    <property type="match status" value="1"/>
</dbReference>
<dbReference type="PROSITE" id="PS50297">
    <property type="entry name" value="ANK_REP_REGION"/>
    <property type="match status" value="1"/>
</dbReference>
<keyword id="KW-0040">ANK repeat</keyword>
<keyword id="KW-0539">Nucleus</keyword>
<keyword id="KW-0597">Phosphoprotein</keyword>
<keyword id="KW-1185">Reference proteome</keyword>
<keyword id="KW-0677">Repeat</keyword>
<reference key="1">
    <citation type="journal article" date="2004" name="Genome Res.">
        <title>The genomic sequence and comparative analysis of the rat major histocompatibility complex.</title>
        <authorList>
            <person name="Hurt P."/>
            <person name="Walter L."/>
            <person name="Sudbrak R."/>
            <person name="Klages S."/>
            <person name="Mueller I."/>
            <person name="Shiina T."/>
            <person name="Inoko H."/>
            <person name="Lehrach H."/>
            <person name="Guenther E."/>
            <person name="Reinhardt R."/>
            <person name="Himmelbauer H."/>
        </authorList>
    </citation>
    <scope>NUCLEOTIDE SEQUENCE [LARGE SCALE GENOMIC DNA]</scope>
    <source>
        <strain>Brown Norway</strain>
    </source>
</reference>
<reference key="2">
    <citation type="journal article" date="2004" name="Genome Res.">
        <title>The status, quality, and expansion of the NIH full-length cDNA project: the Mammalian Gene Collection (MGC).</title>
        <authorList>
            <consortium name="The MGC Project Team"/>
        </authorList>
    </citation>
    <scope>NUCLEOTIDE SEQUENCE [LARGE SCALE MRNA]</scope>
    <source>
        <tissue>Prostate</tissue>
    </source>
</reference>
<reference key="3">
    <citation type="journal article" date="2002" name="Immunogenetics">
        <title>Does the rat have an H2-D orthologue next to Bat1?</title>
        <authorList>
            <person name="Lambracht-Washington D."/>
            <person name="Fischer Lindahl K."/>
        </authorList>
    </citation>
    <scope>NUCLEOTIDE SEQUENCE [GENOMIC DNA] OF 1-110</scope>
    <source>
        <strain>Lewis</strain>
    </source>
</reference>
<evidence type="ECO:0000250" key="1"/>
<evidence type="ECO:0000250" key="2">
    <source>
        <dbReference type="UniProtKB" id="Q9UBC1"/>
    </source>
</evidence>
<evidence type="ECO:0000256" key="3">
    <source>
        <dbReference type="SAM" id="MobiDB-lite"/>
    </source>
</evidence>
<evidence type="ECO:0000305" key="4"/>
<accession>Q8R2H1</accession>
<accession>Q499T4</accession>
<gene>
    <name type="primary">Nfkbil1</name>
    <name type="synonym">Ikbl</name>
</gene>
<name>IKBL1_RAT</name>
<sequence>MSNPSPQAPEEEASTSVCRPQSSMASVSRRHRRERRFRRYLSAGRLVRAQALLQRHPGLDVDAGQPPPLHRACARHDAPALCLLLRLGADPAHQDRHGDTALHAAARQGPNAYTDFFLPLLSRCPSAMGIKNKDGETPGQILGWGPPWDSAEEEEDEEVSKEREWRQKLQGELEDEWQEVIGRFEDDASRETQEPESFSAWSERLAREHAQKQRRQQLEAEGSRRPPRAEGSSHSWRQQEEEQRLFRERARVKEKELCESRARRAQEAQGDRGPAPPRARPRAEHPRGAGRGSLWRFGDVPWPCPGGGDPEAMAAALVARGPPLEEQGALKRYLRVQQVRWHPDRFLQRFRNQIETWELGRVMGAVTALSQALNRHAEALK</sequence>
<organism>
    <name type="scientific">Rattus norvegicus</name>
    <name type="common">Rat</name>
    <dbReference type="NCBI Taxonomy" id="10116"/>
    <lineage>
        <taxon>Eukaryota</taxon>
        <taxon>Metazoa</taxon>
        <taxon>Chordata</taxon>
        <taxon>Craniata</taxon>
        <taxon>Vertebrata</taxon>
        <taxon>Euteleostomi</taxon>
        <taxon>Mammalia</taxon>
        <taxon>Eutheria</taxon>
        <taxon>Euarchontoglires</taxon>
        <taxon>Glires</taxon>
        <taxon>Rodentia</taxon>
        <taxon>Myomorpha</taxon>
        <taxon>Muroidea</taxon>
        <taxon>Muridae</taxon>
        <taxon>Murinae</taxon>
        <taxon>Rattus</taxon>
    </lineage>
</organism>
<proteinExistence type="evidence at transcript level"/>
<comment type="function">
    <text evidence="1">Involved in the regulation of innate immune response. Acts as negative regulator of Toll-like receptor and interferon-regulatory factor (IRF) signaling pathways. Contributes to the negative regulation of transcriptional activation of NF-kappa-B target genes in response to endogenous pro-inflammatory stimuli (By similarity).</text>
</comment>
<comment type="subunit">
    <text evidence="1">Interacts with CACTIN (via N-terminal domain); the interaction occurs in a pro-inflammatory-independent manner.</text>
</comment>
<comment type="subcellular location">
    <subcellularLocation>
        <location evidence="1">Nucleus</location>
    </subcellularLocation>
    <text evidence="1">Nuclear localization with a speckled expression pattern in some cells. Colocalizes with CACTIN in the nucleus (By similarity).</text>
</comment>
<comment type="sequence caution" evidence="4">
    <conflict type="erroneous gene model prediction">
        <sequence resource="EMBL-CDS" id="AAL98918"/>
    </conflict>
</comment>